<feature type="chain" id="PRO_1000137933" description="Bifunctional polymyxin resistance protein ArnA">
    <location>
        <begin position="1"/>
        <end position="660"/>
    </location>
</feature>
<feature type="region of interest" description="Formyltransferase ArnAFT">
    <location>
        <begin position="1"/>
        <end position="304"/>
    </location>
</feature>
<feature type="region of interest" description="Dehydrogenase ArnADH">
    <location>
        <begin position="314"/>
        <end position="660"/>
    </location>
</feature>
<feature type="active site" description="Proton donor; for formyltransferase activity" evidence="1">
    <location>
        <position position="104"/>
    </location>
</feature>
<feature type="active site" description="Proton acceptor; for decarboxylase activity" evidence="1">
    <location>
        <position position="434"/>
    </location>
</feature>
<feature type="active site" description="Proton donor; for decarboxylase activity" evidence="1">
    <location>
        <position position="619"/>
    </location>
</feature>
<feature type="binding site" evidence="1">
    <location>
        <begin position="86"/>
        <end position="88"/>
    </location>
    <ligand>
        <name>(6R)-10-formyltetrahydrofolate</name>
        <dbReference type="ChEBI" id="CHEBI:195366"/>
    </ligand>
</feature>
<feature type="binding site" evidence="1">
    <location>
        <position position="114"/>
    </location>
    <ligand>
        <name>(6R)-10-formyltetrahydrofolate</name>
        <dbReference type="ChEBI" id="CHEBI:195366"/>
    </ligand>
</feature>
<feature type="binding site" evidence="1">
    <location>
        <begin position="136"/>
        <end position="140"/>
    </location>
    <ligand>
        <name>(6R)-10-formyltetrahydrofolate</name>
        <dbReference type="ChEBI" id="CHEBI:195366"/>
    </ligand>
</feature>
<feature type="binding site" evidence="1">
    <location>
        <position position="347"/>
    </location>
    <ligand>
        <name>NAD(+)</name>
        <dbReference type="ChEBI" id="CHEBI:57540"/>
    </ligand>
</feature>
<feature type="binding site" evidence="1">
    <location>
        <begin position="368"/>
        <end position="369"/>
    </location>
    <ligand>
        <name>NAD(+)</name>
        <dbReference type="ChEBI" id="CHEBI:57540"/>
    </ligand>
</feature>
<feature type="binding site" evidence="1">
    <location>
        <position position="393"/>
    </location>
    <ligand>
        <name>UDP-alpha-D-glucuronate</name>
        <dbReference type="ChEBI" id="CHEBI:58052"/>
    </ligand>
</feature>
<feature type="binding site" evidence="1">
    <location>
        <position position="398"/>
    </location>
    <ligand>
        <name>UDP-alpha-D-glucuronate</name>
        <dbReference type="ChEBI" id="CHEBI:58052"/>
    </ligand>
</feature>
<feature type="binding site" evidence="1">
    <location>
        <begin position="432"/>
        <end position="433"/>
    </location>
    <ligand>
        <name>UDP-alpha-D-glucuronate</name>
        <dbReference type="ChEBI" id="CHEBI:58052"/>
    </ligand>
</feature>
<feature type="binding site" evidence="1">
    <location>
        <position position="460"/>
    </location>
    <ligand>
        <name>UDP-alpha-D-glucuronate</name>
        <dbReference type="ChEBI" id="CHEBI:58052"/>
    </ligand>
</feature>
<feature type="binding site" evidence="1">
    <location>
        <position position="492"/>
    </location>
    <ligand>
        <name>UDP-alpha-D-glucuronate</name>
        <dbReference type="ChEBI" id="CHEBI:58052"/>
    </ligand>
</feature>
<feature type="binding site" evidence="1">
    <location>
        <begin position="526"/>
        <end position="535"/>
    </location>
    <ligand>
        <name>UDP-alpha-D-glucuronate</name>
        <dbReference type="ChEBI" id="CHEBI:58052"/>
    </ligand>
</feature>
<feature type="binding site" evidence="1">
    <location>
        <position position="613"/>
    </location>
    <ligand>
        <name>UDP-alpha-D-glucuronate</name>
        <dbReference type="ChEBI" id="CHEBI:58052"/>
    </ligand>
</feature>
<feature type="site" description="Transition state stabilizer" evidence="1">
    <location>
        <position position="102"/>
    </location>
</feature>
<feature type="site" description="Raises pKa of active site His" evidence="1">
    <location>
        <position position="140"/>
    </location>
</feature>
<name>ARNA_ECO45</name>
<accession>B7MG22</accession>
<gene>
    <name evidence="1" type="primary">arnA</name>
    <name type="ordered locus">ECS88_2404</name>
</gene>
<protein>
    <recommendedName>
        <fullName evidence="1">Bifunctional polymyxin resistance protein ArnA</fullName>
    </recommendedName>
    <domain>
        <recommendedName>
            <fullName evidence="1">UDP-4-amino-4-deoxy-L-arabinose formyltransferase</fullName>
            <ecNumber evidence="1">2.1.2.13</ecNumber>
        </recommendedName>
        <alternativeName>
            <fullName evidence="1">ArnAFT</fullName>
        </alternativeName>
        <alternativeName>
            <fullName evidence="1">UDP-L-Ara4N formyltransferase</fullName>
        </alternativeName>
    </domain>
    <domain>
        <recommendedName>
            <fullName evidence="1">UDP-glucuronic acid oxidase, UDP-4-keto-hexauronic acid decarboxylating</fullName>
            <ecNumber evidence="1">1.1.1.305</ecNumber>
        </recommendedName>
        <alternativeName>
            <fullName evidence="1">ArnADH</fullName>
        </alternativeName>
        <alternativeName>
            <fullName evidence="1">UDP-GlcUA decarboxylase</fullName>
        </alternativeName>
        <alternativeName>
            <fullName evidence="1">UDP-glucuronic acid dehydrogenase</fullName>
        </alternativeName>
    </domain>
</protein>
<keyword id="KW-0046">Antibiotic resistance</keyword>
<keyword id="KW-0441">Lipid A biosynthesis</keyword>
<keyword id="KW-0444">Lipid biosynthesis</keyword>
<keyword id="KW-0443">Lipid metabolism</keyword>
<keyword id="KW-0448">Lipopolysaccharide biosynthesis</keyword>
<keyword id="KW-0511">Multifunctional enzyme</keyword>
<keyword id="KW-0520">NAD</keyword>
<keyword id="KW-0560">Oxidoreductase</keyword>
<keyword id="KW-1185">Reference proteome</keyword>
<keyword id="KW-0808">Transferase</keyword>
<proteinExistence type="inferred from homology"/>
<reference key="1">
    <citation type="journal article" date="2009" name="PLoS Genet.">
        <title>Organised genome dynamics in the Escherichia coli species results in highly diverse adaptive paths.</title>
        <authorList>
            <person name="Touchon M."/>
            <person name="Hoede C."/>
            <person name="Tenaillon O."/>
            <person name="Barbe V."/>
            <person name="Baeriswyl S."/>
            <person name="Bidet P."/>
            <person name="Bingen E."/>
            <person name="Bonacorsi S."/>
            <person name="Bouchier C."/>
            <person name="Bouvet O."/>
            <person name="Calteau A."/>
            <person name="Chiapello H."/>
            <person name="Clermont O."/>
            <person name="Cruveiller S."/>
            <person name="Danchin A."/>
            <person name="Diard M."/>
            <person name="Dossat C."/>
            <person name="Karoui M.E."/>
            <person name="Frapy E."/>
            <person name="Garry L."/>
            <person name="Ghigo J.M."/>
            <person name="Gilles A.M."/>
            <person name="Johnson J."/>
            <person name="Le Bouguenec C."/>
            <person name="Lescat M."/>
            <person name="Mangenot S."/>
            <person name="Martinez-Jehanne V."/>
            <person name="Matic I."/>
            <person name="Nassif X."/>
            <person name="Oztas S."/>
            <person name="Petit M.A."/>
            <person name="Pichon C."/>
            <person name="Rouy Z."/>
            <person name="Ruf C.S."/>
            <person name="Schneider D."/>
            <person name="Tourret J."/>
            <person name="Vacherie B."/>
            <person name="Vallenet D."/>
            <person name="Medigue C."/>
            <person name="Rocha E.P.C."/>
            <person name="Denamur E."/>
        </authorList>
    </citation>
    <scope>NUCLEOTIDE SEQUENCE [LARGE SCALE GENOMIC DNA]</scope>
    <source>
        <strain>S88 / ExPEC</strain>
    </source>
</reference>
<dbReference type="EC" id="2.1.2.13" evidence="1"/>
<dbReference type="EC" id="1.1.1.305" evidence="1"/>
<dbReference type="EMBL" id="CU928161">
    <property type="protein sequence ID" value="CAR03684.1"/>
    <property type="molecule type" value="Genomic_DNA"/>
</dbReference>
<dbReference type="RefSeq" id="WP_000860295.1">
    <property type="nucleotide sequence ID" value="NC_011742.1"/>
</dbReference>
<dbReference type="SMR" id="B7MG22"/>
<dbReference type="KEGG" id="ecz:ECS88_2404"/>
<dbReference type="HOGENOM" id="CLU_007383_23_2_6"/>
<dbReference type="UniPathway" id="UPA00030"/>
<dbReference type="UniPathway" id="UPA00032">
    <property type="reaction ID" value="UER00492"/>
</dbReference>
<dbReference type="UniPathway" id="UPA00032">
    <property type="reaction ID" value="UER00494"/>
</dbReference>
<dbReference type="Proteomes" id="UP000000747">
    <property type="component" value="Chromosome"/>
</dbReference>
<dbReference type="GO" id="GO:0016020">
    <property type="term" value="C:membrane"/>
    <property type="evidence" value="ECO:0007669"/>
    <property type="project" value="GOC"/>
</dbReference>
<dbReference type="GO" id="GO:0016831">
    <property type="term" value="F:carboxy-lyase activity"/>
    <property type="evidence" value="ECO:0007669"/>
    <property type="project" value="InterPro"/>
</dbReference>
<dbReference type="GO" id="GO:0099619">
    <property type="term" value="F:UDP-4-amino-4-deoxy-L-arabinose formyltransferase activity"/>
    <property type="evidence" value="ECO:0007669"/>
    <property type="project" value="UniProtKB-EC"/>
</dbReference>
<dbReference type="GO" id="GO:0099618">
    <property type="term" value="F:UDP-glucuronate dehydrogenase activity"/>
    <property type="evidence" value="ECO:0007669"/>
    <property type="project" value="UniProtKB-EC"/>
</dbReference>
<dbReference type="GO" id="GO:0009245">
    <property type="term" value="P:lipid A biosynthetic process"/>
    <property type="evidence" value="ECO:0007669"/>
    <property type="project" value="UniProtKB-KW"/>
</dbReference>
<dbReference type="GO" id="GO:0009103">
    <property type="term" value="P:lipopolysaccharide biosynthetic process"/>
    <property type="evidence" value="ECO:0007669"/>
    <property type="project" value="UniProtKB-UniRule"/>
</dbReference>
<dbReference type="GO" id="GO:0046677">
    <property type="term" value="P:response to antibiotic"/>
    <property type="evidence" value="ECO:0007669"/>
    <property type="project" value="UniProtKB-KW"/>
</dbReference>
<dbReference type="CDD" id="cd08702">
    <property type="entry name" value="Arna_FMT_C"/>
    <property type="match status" value="1"/>
</dbReference>
<dbReference type="CDD" id="cd05257">
    <property type="entry name" value="Arna_like_SDR_e"/>
    <property type="match status" value="1"/>
</dbReference>
<dbReference type="CDD" id="cd08644">
    <property type="entry name" value="FMT_core_ArnA_N"/>
    <property type="match status" value="1"/>
</dbReference>
<dbReference type="FunFam" id="3.40.50.12230:FF:000002">
    <property type="entry name" value="Bifunctional polymyxin resistance protein ArnA"/>
    <property type="match status" value="1"/>
</dbReference>
<dbReference type="FunFam" id="3.40.50.720:FF:000197">
    <property type="entry name" value="Bifunctional polymyxin resistance protein ArnA"/>
    <property type="match status" value="1"/>
</dbReference>
<dbReference type="Gene3D" id="3.40.50.12230">
    <property type="match status" value="1"/>
</dbReference>
<dbReference type="Gene3D" id="3.40.50.720">
    <property type="entry name" value="NAD(P)-binding Rossmann-like Domain"/>
    <property type="match status" value="1"/>
</dbReference>
<dbReference type="HAMAP" id="MF_01166">
    <property type="entry name" value="ArnA"/>
    <property type="match status" value="1"/>
</dbReference>
<dbReference type="InterPro" id="IPR045869">
    <property type="entry name" value="Arna-like_SDR_e"/>
</dbReference>
<dbReference type="InterPro" id="IPR021168">
    <property type="entry name" value="Bifun_polymyxin_resist_ArnA"/>
</dbReference>
<dbReference type="InterPro" id="IPR001509">
    <property type="entry name" value="Epimerase_deHydtase"/>
</dbReference>
<dbReference type="InterPro" id="IPR005793">
    <property type="entry name" value="Formyl_trans_C"/>
</dbReference>
<dbReference type="InterPro" id="IPR002376">
    <property type="entry name" value="Formyl_transf_N"/>
</dbReference>
<dbReference type="InterPro" id="IPR036477">
    <property type="entry name" value="Formyl_transf_N_sf"/>
</dbReference>
<dbReference type="InterPro" id="IPR011034">
    <property type="entry name" value="Formyl_transferase-like_C_sf"/>
</dbReference>
<dbReference type="InterPro" id="IPR050177">
    <property type="entry name" value="Lipid_A_modif_metabolic_enz"/>
</dbReference>
<dbReference type="InterPro" id="IPR036291">
    <property type="entry name" value="NAD(P)-bd_dom_sf"/>
</dbReference>
<dbReference type="NCBIfam" id="NF005414">
    <property type="entry name" value="PRK06988.1"/>
    <property type="match status" value="1"/>
</dbReference>
<dbReference type="NCBIfam" id="NF005998">
    <property type="entry name" value="PRK08125.1"/>
    <property type="match status" value="1"/>
</dbReference>
<dbReference type="NCBIfam" id="NF008872">
    <property type="entry name" value="PRK11908.1"/>
    <property type="match status" value="1"/>
</dbReference>
<dbReference type="PANTHER" id="PTHR43245">
    <property type="entry name" value="BIFUNCTIONAL POLYMYXIN RESISTANCE PROTEIN ARNA"/>
    <property type="match status" value="1"/>
</dbReference>
<dbReference type="PANTHER" id="PTHR43245:SF13">
    <property type="entry name" value="UDP-D-APIOSE_UDP-D-XYLOSE SYNTHASE 2"/>
    <property type="match status" value="1"/>
</dbReference>
<dbReference type="Pfam" id="PF01370">
    <property type="entry name" value="Epimerase"/>
    <property type="match status" value="1"/>
</dbReference>
<dbReference type="Pfam" id="PF02911">
    <property type="entry name" value="Formyl_trans_C"/>
    <property type="match status" value="1"/>
</dbReference>
<dbReference type="Pfam" id="PF00551">
    <property type="entry name" value="Formyl_trans_N"/>
    <property type="match status" value="1"/>
</dbReference>
<dbReference type="PIRSF" id="PIRSF036506">
    <property type="entry name" value="Bifun_polymyxin_resist_ArnA"/>
    <property type="match status" value="1"/>
</dbReference>
<dbReference type="SUPFAM" id="SSF50486">
    <property type="entry name" value="FMT C-terminal domain-like"/>
    <property type="match status" value="1"/>
</dbReference>
<dbReference type="SUPFAM" id="SSF53328">
    <property type="entry name" value="Formyltransferase"/>
    <property type="match status" value="1"/>
</dbReference>
<dbReference type="SUPFAM" id="SSF51735">
    <property type="entry name" value="NAD(P)-binding Rossmann-fold domains"/>
    <property type="match status" value="1"/>
</dbReference>
<sequence length="660" mass="74318">MKTVVFAYHDMGCLGIEALLAAGYEISAIFTHTDNPGEKAFYGSVARLAAERGIPVYAPDNVNHPLWVERIAQLSPEVIFSFYYRHLICDEILQLAPRGAFNLHGSLLPKYRGRAPLNWVLVNGETETGVTLHRMVKRADAGAIVAQLRVAIAPDDIAITLHHKLCHAARQLLEQTLPAIKHGNILEIAQRENEATCFGRRTPDDSFLEWHKSASVLHNMVRAVADPWPGAFSYVGNQKFTVWSSRVHPHASKAQPGSVISVAPLLIACGDGALEIVTGQAGDGITMQGSQLAQTLGLVQGSRLNSQPACAARRRTRVLILGVNGFIGNHLTERLLREDHYEVYGLDIGSDAISRFLNHPHFHFVEGDISIHSEWIEYHVKKCDVVLPLVAIATPIEYTRNPLRVFELDFEENLRIIRYCVKYRKRIIFPSTSEVYGMCSDKYFDEDHSNLIVGPVNKPRWIYSVSKQLLDRVIWAYGEKEGLQFTLFRPFNWMGPRLDNLNAARIGSSRAITQLILNLVEGSPIKLIDGGKQKRCFTDIRDGIEALYRIIENAGNRCDGEIINIGNPENEASIEELGEMLLASFEKHPLRHYFPPFAGFRVVESSSYYGKGYQDVEHRKPSIRNARRCLNWEPKIDMQETIDETLDFFLRTVDLTDKPS</sequence>
<organism>
    <name type="scientific">Escherichia coli O45:K1 (strain S88 / ExPEC)</name>
    <dbReference type="NCBI Taxonomy" id="585035"/>
    <lineage>
        <taxon>Bacteria</taxon>
        <taxon>Pseudomonadati</taxon>
        <taxon>Pseudomonadota</taxon>
        <taxon>Gammaproteobacteria</taxon>
        <taxon>Enterobacterales</taxon>
        <taxon>Enterobacteriaceae</taxon>
        <taxon>Escherichia</taxon>
    </lineage>
</organism>
<comment type="function">
    <text evidence="1">Bifunctional enzyme that catalyzes the oxidative decarboxylation of UDP-glucuronic acid (UDP-GlcUA) to UDP-4-keto-arabinose (UDP-Ara4O) and the addition of a formyl group to UDP-4-amino-4-deoxy-L-arabinose (UDP-L-Ara4N) to form UDP-L-4-formamido-arabinose (UDP-L-Ara4FN). The modified arabinose is attached to lipid A and is required for resistance to polymyxin and cationic antimicrobial peptides.</text>
</comment>
<comment type="catalytic activity">
    <reaction evidence="1">
        <text>UDP-alpha-D-glucuronate + NAD(+) = UDP-beta-L-threo-pentopyranos-4-ulose + CO2 + NADH</text>
        <dbReference type="Rhea" id="RHEA:24702"/>
        <dbReference type="ChEBI" id="CHEBI:16526"/>
        <dbReference type="ChEBI" id="CHEBI:57540"/>
        <dbReference type="ChEBI" id="CHEBI:57945"/>
        <dbReference type="ChEBI" id="CHEBI:58052"/>
        <dbReference type="ChEBI" id="CHEBI:58710"/>
        <dbReference type="EC" id="1.1.1.305"/>
    </reaction>
</comment>
<comment type="catalytic activity">
    <reaction evidence="1">
        <text>UDP-4-amino-4-deoxy-beta-L-arabinose + (6R)-10-formyltetrahydrofolate = UDP-4-deoxy-4-formamido-beta-L-arabinose + (6S)-5,6,7,8-tetrahydrofolate + H(+)</text>
        <dbReference type="Rhea" id="RHEA:24706"/>
        <dbReference type="ChEBI" id="CHEBI:15378"/>
        <dbReference type="ChEBI" id="CHEBI:57453"/>
        <dbReference type="ChEBI" id="CHEBI:58708"/>
        <dbReference type="ChEBI" id="CHEBI:58709"/>
        <dbReference type="ChEBI" id="CHEBI:195366"/>
        <dbReference type="EC" id="2.1.2.13"/>
    </reaction>
</comment>
<comment type="pathway">
    <text evidence="1">Nucleotide-sugar biosynthesis; UDP-4-deoxy-4-formamido-beta-L-arabinose biosynthesis; UDP-4-deoxy-4-formamido-beta-L-arabinose from UDP-alpha-D-glucuronate: step 1/3.</text>
</comment>
<comment type="pathway">
    <text evidence="1">Nucleotide-sugar biosynthesis; UDP-4-deoxy-4-formamido-beta-L-arabinose biosynthesis; UDP-4-deoxy-4-formamido-beta-L-arabinose from UDP-alpha-D-glucuronate: step 3/3.</text>
</comment>
<comment type="pathway">
    <text evidence="1">Bacterial outer membrane biogenesis; lipopolysaccharide biosynthesis.</text>
</comment>
<comment type="subunit">
    <text evidence="1">Homohexamer, formed by a dimer of trimers.</text>
</comment>
<comment type="similarity">
    <text evidence="1">In the N-terminal section; belongs to the Fmt family. UDP-L-Ara4N formyltransferase subfamily.</text>
</comment>
<comment type="similarity">
    <text evidence="1">In the C-terminal section; belongs to the NAD(P)-dependent epimerase/dehydratase family. UDP-glucuronic acid decarboxylase subfamily.</text>
</comment>
<evidence type="ECO:0000255" key="1">
    <source>
        <dbReference type="HAMAP-Rule" id="MF_01166"/>
    </source>
</evidence>